<feature type="signal peptide" evidence="1">
    <location>
        <begin position="1"/>
        <end position="18"/>
    </location>
</feature>
<feature type="chain" id="PRO_0000021579" description="Lactobacillus up-regulated protein" evidence="1">
    <location>
        <begin position="19"/>
        <end position="175"/>
    </location>
</feature>
<feature type="glycosylation site" description="N-linked (GlcNAc...) asparagine" evidence="1">
    <location>
        <position position="59"/>
    </location>
</feature>
<feature type="sequence conflict" description="In Ref. 3; AA sequence." evidence="3" ref="3">
    <original>R</original>
    <variation>K</variation>
    <location>
        <position position="21"/>
    </location>
</feature>
<sequence length="175" mass="18952">MRSIFLAVLGLMATSSLAAPRVAAQEGISAFDAMAKLKSVPLGYVHIADDGVARAYDENESVIDYVPLTNDQLKHLLQNLPEAWKKEEDHLHAVFDAVDGREVTDEKQLLEPPAELRNPMNHQAPQSKREANPLQQADYYCVGQPCTSGDACRFLGCRGCAQIDAALPGGGGVCF</sequence>
<evidence type="ECO:0000255" key="1"/>
<evidence type="ECO:0000269" key="2">
    <source>
    </source>
</evidence>
<evidence type="ECO:0000305" key="3"/>
<protein>
    <recommendedName>
        <fullName>Lactobacillus up-regulated protein</fullName>
    </recommendedName>
</protein>
<proteinExistence type="evidence at protein level"/>
<accession>Q5BHG4</accession>
<accession>C8VRI4</accession>
<accession>P84515</accession>
<keyword id="KW-0903">Direct protein sequencing</keyword>
<keyword id="KW-0325">Glycoprotein</keyword>
<keyword id="KW-1185">Reference proteome</keyword>
<keyword id="KW-0732">Signal</keyword>
<reference key="1">
    <citation type="journal article" date="2005" name="Nature">
        <title>Sequencing of Aspergillus nidulans and comparative analysis with A. fumigatus and A. oryzae.</title>
        <authorList>
            <person name="Galagan J.E."/>
            <person name="Calvo S.E."/>
            <person name="Cuomo C."/>
            <person name="Ma L.-J."/>
            <person name="Wortman J.R."/>
            <person name="Batzoglou S."/>
            <person name="Lee S.-I."/>
            <person name="Bastuerkmen M."/>
            <person name="Spevak C.C."/>
            <person name="Clutterbuck J."/>
            <person name="Kapitonov V."/>
            <person name="Jurka J."/>
            <person name="Scazzocchio C."/>
            <person name="Farman M.L."/>
            <person name="Butler J."/>
            <person name="Purcell S."/>
            <person name="Harris S."/>
            <person name="Braus G.H."/>
            <person name="Draht O."/>
            <person name="Busch S."/>
            <person name="D'Enfert C."/>
            <person name="Bouchier C."/>
            <person name="Goldman G.H."/>
            <person name="Bell-Pedersen D."/>
            <person name="Griffiths-Jones S."/>
            <person name="Doonan J.H."/>
            <person name="Yu J."/>
            <person name="Vienken K."/>
            <person name="Pain A."/>
            <person name="Freitag M."/>
            <person name="Selker E.U."/>
            <person name="Archer D.B."/>
            <person name="Penalva M.A."/>
            <person name="Oakley B.R."/>
            <person name="Momany M."/>
            <person name="Tanaka T."/>
            <person name="Kumagai T."/>
            <person name="Asai K."/>
            <person name="Machida M."/>
            <person name="Nierman W.C."/>
            <person name="Denning D.W."/>
            <person name="Caddick M.X."/>
            <person name="Hynes M."/>
            <person name="Paoletti M."/>
            <person name="Fischer R."/>
            <person name="Miller B.L."/>
            <person name="Dyer P.S."/>
            <person name="Sachs M.S."/>
            <person name="Osmani S.A."/>
            <person name="Birren B.W."/>
        </authorList>
    </citation>
    <scope>NUCLEOTIDE SEQUENCE [LARGE SCALE GENOMIC DNA]</scope>
    <source>
        <strain>FGSC A4 / ATCC 38163 / CBS 112.46 / NRRL 194 / M139</strain>
    </source>
</reference>
<reference key="2">
    <citation type="journal article" date="2009" name="Fungal Genet. Biol.">
        <title>The 2008 update of the Aspergillus nidulans genome annotation: a community effort.</title>
        <authorList>
            <person name="Wortman J.R."/>
            <person name="Gilsenan J.M."/>
            <person name="Joardar V."/>
            <person name="Deegan J."/>
            <person name="Clutterbuck J."/>
            <person name="Andersen M.R."/>
            <person name="Archer D."/>
            <person name="Bencina M."/>
            <person name="Braus G."/>
            <person name="Coutinho P."/>
            <person name="von Dohren H."/>
            <person name="Doonan J."/>
            <person name="Driessen A.J."/>
            <person name="Durek P."/>
            <person name="Espeso E."/>
            <person name="Fekete E."/>
            <person name="Flipphi M."/>
            <person name="Estrada C.G."/>
            <person name="Geysens S."/>
            <person name="Goldman G."/>
            <person name="de Groot P.W."/>
            <person name="Hansen K."/>
            <person name="Harris S.D."/>
            <person name="Heinekamp T."/>
            <person name="Helmstaedt K."/>
            <person name="Henrissat B."/>
            <person name="Hofmann G."/>
            <person name="Homan T."/>
            <person name="Horio T."/>
            <person name="Horiuchi H."/>
            <person name="James S."/>
            <person name="Jones M."/>
            <person name="Karaffa L."/>
            <person name="Karanyi Z."/>
            <person name="Kato M."/>
            <person name="Keller N."/>
            <person name="Kelly D.E."/>
            <person name="Kiel J.A."/>
            <person name="Kim J.M."/>
            <person name="van der Klei I.J."/>
            <person name="Klis F.M."/>
            <person name="Kovalchuk A."/>
            <person name="Krasevec N."/>
            <person name="Kubicek C.P."/>
            <person name="Liu B."/>
            <person name="Maccabe A."/>
            <person name="Meyer V."/>
            <person name="Mirabito P."/>
            <person name="Miskei M."/>
            <person name="Mos M."/>
            <person name="Mullins J."/>
            <person name="Nelson D.R."/>
            <person name="Nielsen J."/>
            <person name="Oakley B.R."/>
            <person name="Osmani S.A."/>
            <person name="Pakula T."/>
            <person name="Paszewski A."/>
            <person name="Paulsen I."/>
            <person name="Pilsyk S."/>
            <person name="Pocsi I."/>
            <person name="Punt P.J."/>
            <person name="Ram A.F."/>
            <person name="Ren Q."/>
            <person name="Robellet X."/>
            <person name="Robson G."/>
            <person name="Seiboth B."/>
            <person name="van Solingen P."/>
            <person name="Specht T."/>
            <person name="Sun J."/>
            <person name="Taheri-Talesh N."/>
            <person name="Takeshita N."/>
            <person name="Ussery D."/>
            <person name="vanKuyk P.A."/>
            <person name="Visser H."/>
            <person name="van de Vondervoort P.J."/>
            <person name="de Vries R.P."/>
            <person name="Walton J."/>
            <person name="Xiang X."/>
            <person name="Xiong Y."/>
            <person name="Zeng A.P."/>
            <person name="Brandt B.W."/>
            <person name="Cornell M.J."/>
            <person name="van den Hondel C.A."/>
            <person name="Visser J."/>
            <person name="Oliver S.G."/>
            <person name="Turner G."/>
        </authorList>
    </citation>
    <scope>GENOME REANNOTATION</scope>
    <source>
        <strain>FGSC A4 / ATCC 38163 / CBS 112.46 / NRRL 194 / M139</strain>
    </source>
</reference>
<reference evidence="3" key="3">
    <citation type="journal article" date="2005" name="FEMS Microbiol. Lett.">
        <title>Co-cultivation of antifungal Lactobacillus plantarum MiLAB 393 and Aspergillus nidulans, evaluation of effects on fungal growth and protein expression.</title>
        <authorList>
            <person name="Strom K."/>
            <person name="Schnurer J."/>
            <person name="Melin P."/>
        </authorList>
    </citation>
    <scope>PROTEIN SEQUENCE OF 21-36; 39-73; 87-101 AND 108-117</scope>
    <scope>INDUCTION</scope>
    <source>
        <strain evidence="2">J283</strain>
        <tissue evidence="2">Mycelium</tissue>
    </source>
</reference>
<dbReference type="EMBL" id="AACD01000002">
    <property type="protein sequence ID" value="EAA65324.1"/>
    <property type="status" value="ALT_SEQ"/>
    <property type="molecule type" value="Genomic_DNA"/>
</dbReference>
<dbReference type="EMBL" id="BN001308">
    <property type="protein sequence ID" value="CBF90399.1"/>
    <property type="status" value="ALT_SEQ"/>
    <property type="molecule type" value="Genomic_DNA"/>
</dbReference>
<dbReference type="RefSeq" id="XP_657609.1">
    <property type="nucleotide sequence ID" value="XM_652517.1"/>
</dbReference>
<dbReference type="STRING" id="227321.Q5BHG4"/>
<dbReference type="GlyCosmos" id="Q5BHG4">
    <property type="glycosylation" value="1 site, No reported glycans"/>
</dbReference>
<dbReference type="KEGG" id="ani:ANIA_00005"/>
<dbReference type="VEuPathDB" id="FungiDB:AN0005"/>
<dbReference type="eggNOG" id="ENOG502T23N">
    <property type="taxonomic scope" value="Eukaryota"/>
</dbReference>
<dbReference type="HOGENOM" id="CLU_1731443_0_0_1"/>
<dbReference type="InParanoid" id="Q5BHG4"/>
<dbReference type="OrthoDB" id="3660917at2759"/>
<dbReference type="Proteomes" id="UP000000560">
    <property type="component" value="Chromosome VIII"/>
</dbReference>
<comment type="induction">
    <text evidence="2">Up-regulated during co-cultivation with L.plantarum.</text>
</comment>
<comment type="sequence caution" evidence="3">
    <conflict type="erroneous gene model prediction">
        <sequence resource="EMBL-CDS" id="CBF90399"/>
    </conflict>
</comment>
<comment type="sequence caution" evidence="3">
    <conflict type="erroneous gene model prediction">
        <sequence resource="EMBL-CDS" id="EAA65324"/>
    </conflict>
</comment>
<name>LBUA_EMENI</name>
<organism>
    <name type="scientific">Emericella nidulans (strain FGSC A4 / ATCC 38163 / CBS 112.46 / NRRL 194 / M139)</name>
    <name type="common">Aspergillus nidulans</name>
    <dbReference type="NCBI Taxonomy" id="227321"/>
    <lineage>
        <taxon>Eukaryota</taxon>
        <taxon>Fungi</taxon>
        <taxon>Dikarya</taxon>
        <taxon>Ascomycota</taxon>
        <taxon>Pezizomycotina</taxon>
        <taxon>Eurotiomycetes</taxon>
        <taxon>Eurotiomycetidae</taxon>
        <taxon>Eurotiales</taxon>
        <taxon>Aspergillaceae</taxon>
        <taxon>Aspergillus</taxon>
        <taxon>Aspergillus subgen. Nidulantes</taxon>
    </lineage>
</organism>
<gene>
    <name type="primary">lbuA</name>
    <name type="ORF">AN0005</name>
</gene>